<dbReference type="EMBL" id="CT573326">
    <property type="protein sequence ID" value="CAK13132.1"/>
    <property type="molecule type" value="Genomic_DNA"/>
</dbReference>
<dbReference type="RefSeq" id="WP_011531593.1">
    <property type="nucleotide sequence ID" value="NC_008027.1"/>
</dbReference>
<dbReference type="SMR" id="Q1IGS0"/>
<dbReference type="STRING" id="384676.PSEEN0158"/>
<dbReference type="GeneID" id="32803511"/>
<dbReference type="KEGG" id="pen:PSEEN0158"/>
<dbReference type="eggNOG" id="COG1495">
    <property type="taxonomic scope" value="Bacteria"/>
</dbReference>
<dbReference type="HOGENOM" id="CLU_098660_1_1_6"/>
<dbReference type="OrthoDB" id="3711263at2"/>
<dbReference type="Proteomes" id="UP000000658">
    <property type="component" value="Chromosome"/>
</dbReference>
<dbReference type="GO" id="GO:0005886">
    <property type="term" value="C:plasma membrane"/>
    <property type="evidence" value="ECO:0007669"/>
    <property type="project" value="UniProtKB-SubCell"/>
</dbReference>
<dbReference type="GO" id="GO:0009055">
    <property type="term" value="F:electron transfer activity"/>
    <property type="evidence" value="ECO:0007669"/>
    <property type="project" value="UniProtKB-UniRule"/>
</dbReference>
<dbReference type="GO" id="GO:0015035">
    <property type="term" value="F:protein-disulfide reductase activity"/>
    <property type="evidence" value="ECO:0007669"/>
    <property type="project" value="UniProtKB-UniRule"/>
</dbReference>
<dbReference type="GO" id="GO:0006457">
    <property type="term" value="P:protein folding"/>
    <property type="evidence" value="ECO:0007669"/>
    <property type="project" value="InterPro"/>
</dbReference>
<dbReference type="Gene3D" id="1.20.1550.10">
    <property type="entry name" value="DsbB-like"/>
    <property type="match status" value="1"/>
</dbReference>
<dbReference type="HAMAP" id="MF_00286">
    <property type="entry name" value="DsbB"/>
    <property type="match status" value="1"/>
</dbReference>
<dbReference type="InterPro" id="IPR003752">
    <property type="entry name" value="DiS_bond_form_DsbB/BdbC"/>
</dbReference>
<dbReference type="InterPro" id="IPR022920">
    <property type="entry name" value="Disulphide_bond_form_DsbB"/>
</dbReference>
<dbReference type="InterPro" id="IPR050183">
    <property type="entry name" value="DsbB"/>
</dbReference>
<dbReference type="InterPro" id="IPR023380">
    <property type="entry name" value="DsbB-like_sf"/>
</dbReference>
<dbReference type="PANTHER" id="PTHR36570">
    <property type="entry name" value="DISULFIDE BOND FORMATION PROTEIN B"/>
    <property type="match status" value="1"/>
</dbReference>
<dbReference type="PANTHER" id="PTHR36570:SF3">
    <property type="entry name" value="DISULFIDE BOND FORMATION PROTEIN B"/>
    <property type="match status" value="1"/>
</dbReference>
<dbReference type="Pfam" id="PF02600">
    <property type="entry name" value="DsbB"/>
    <property type="match status" value="1"/>
</dbReference>
<dbReference type="SUPFAM" id="SSF158442">
    <property type="entry name" value="DsbB-like"/>
    <property type="match status" value="1"/>
</dbReference>
<name>DSBB2_PSEE4</name>
<comment type="function">
    <text evidence="1">Required for disulfide bond formation in some periplasmic proteins. Acts by oxidizing the DsbA protein.</text>
</comment>
<comment type="subcellular location">
    <subcellularLocation>
        <location evidence="1">Cell inner membrane</location>
        <topology evidence="1">Multi-pass membrane protein</topology>
    </subcellularLocation>
</comment>
<comment type="similarity">
    <text evidence="1">Belongs to the DsbB family.</text>
</comment>
<accession>Q1IGS0</accession>
<keyword id="KW-0997">Cell inner membrane</keyword>
<keyword id="KW-1003">Cell membrane</keyword>
<keyword id="KW-0143">Chaperone</keyword>
<keyword id="KW-1015">Disulfide bond</keyword>
<keyword id="KW-0249">Electron transport</keyword>
<keyword id="KW-0472">Membrane</keyword>
<keyword id="KW-0560">Oxidoreductase</keyword>
<keyword id="KW-0676">Redox-active center</keyword>
<keyword id="KW-0812">Transmembrane</keyword>
<keyword id="KW-1133">Transmembrane helix</keyword>
<keyword id="KW-0813">Transport</keyword>
<proteinExistence type="inferred from homology"/>
<feature type="chain" id="PRO_0000298386" description="Disulfide bond formation protein B 2">
    <location>
        <begin position="1"/>
        <end position="168"/>
    </location>
</feature>
<feature type="topological domain" description="Cytoplasmic" evidence="1">
    <location>
        <begin position="1"/>
        <end position="9"/>
    </location>
</feature>
<feature type="transmembrane region" description="Helical" evidence="1">
    <location>
        <begin position="10"/>
        <end position="26"/>
    </location>
</feature>
<feature type="topological domain" description="Periplasmic" evidence="1">
    <location>
        <begin position="27"/>
        <end position="44"/>
    </location>
</feature>
<feature type="transmembrane region" description="Helical" evidence="1">
    <location>
        <begin position="45"/>
        <end position="61"/>
    </location>
</feature>
<feature type="topological domain" description="Cytoplasmic" evidence="1">
    <location>
        <begin position="62"/>
        <end position="67"/>
    </location>
</feature>
<feature type="transmembrane region" description="Helical" evidence="1">
    <location>
        <begin position="68"/>
        <end position="85"/>
    </location>
</feature>
<feature type="topological domain" description="Periplasmic" evidence="1">
    <location>
        <begin position="86"/>
        <end position="140"/>
    </location>
</feature>
<feature type="transmembrane region" description="Helical" evidence="1">
    <location>
        <begin position="141"/>
        <end position="159"/>
    </location>
</feature>
<feature type="topological domain" description="Cytoplasmic" evidence="1">
    <location>
        <begin position="160"/>
        <end position="168"/>
    </location>
</feature>
<feature type="disulfide bond" description="Redox-active" evidence="1">
    <location>
        <begin position="36"/>
        <end position="39"/>
    </location>
</feature>
<feature type="disulfide bond" description="Redox-active" evidence="1">
    <location>
        <begin position="100"/>
        <end position="126"/>
    </location>
</feature>
<organism>
    <name type="scientific">Pseudomonas entomophila (strain L48)</name>
    <dbReference type="NCBI Taxonomy" id="384676"/>
    <lineage>
        <taxon>Bacteria</taxon>
        <taxon>Pseudomonadati</taxon>
        <taxon>Pseudomonadota</taxon>
        <taxon>Gammaproteobacteria</taxon>
        <taxon>Pseudomonadales</taxon>
        <taxon>Pseudomonadaceae</taxon>
        <taxon>Pseudomonas</taxon>
    </lineage>
</organism>
<sequence>MSLACLRSFFLPALLASTAVLVASFHLESVVGLVPCALCFSQRLMLGVYALVCLAALVHSPAARGRRAYAGLALASAFGGALLAGRHVWLQGDPQVVDGCHLPVEQVLQRPLGEILQMFLLGSPDCVSISWSFLDLTLPEWSLLAFLLLAAMPLSWLVAYRFRKRAMA</sequence>
<protein>
    <recommendedName>
        <fullName evidence="1">Disulfide bond formation protein B 2</fullName>
    </recommendedName>
    <alternativeName>
        <fullName evidence="1">Disulfide oxidoreductase 2</fullName>
    </alternativeName>
</protein>
<gene>
    <name evidence="1" type="primary">dsbB2</name>
    <name type="ordered locus">PSEEN0158</name>
</gene>
<evidence type="ECO:0000255" key="1">
    <source>
        <dbReference type="HAMAP-Rule" id="MF_00286"/>
    </source>
</evidence>
<reference key="1">
    <citation type="journal article" date="2006" name="Nat. Biotechnol.">
        <title>Complete genome sequence of the entomopathogenic and metabolically versatile soil bacterium Pseudomonas entomophila.</title>
        <authorList>
            <person name="Vodovar N."/>
            <person name="Vallenet D."/>
            <person name="Cruveiller S."/>
            <person name="Rouy Z."/>
            <person name="Barbe V."/>
            <person name="Acosta C."/>
            <person name="Cattolico L."/>
            <person name="Jubin C."/>
            <person name="Lajus A."/>
            <person name="Segurens B."/>
            <person name="Vacherie B."/>
            <person name="Wincker P."/>
            <person name="Weissenbach J."/>
            <person name="Lemaitre B."/>
            <person name="Medigue C."/>
            <person name="Boccard F."/>
        </authorList>
    </citation>
    <scope>NUCLEOTIDE SEQUENCE [LARGE SCALE GENOMIC DNA]</scope>
    <source>
        <strain>L48</strain>
    </source>
</reference>